<protein>
    <recommendedName>
        <fullName evidence="1">Eukaryotic translation initiation factor 3 subunit H</fullName>
        <shortName evidence="1">eIF3h</shortName>
    </recommendedName>
</protein>
<proteinExistence type="inferred from homology"/>
<keyword id="KW-0963">Cytoplasm</keyword>
<keyword id="KW-0396">Initiation factor</keyword>
<keyword id="KW-0648">Protein biosynthesis</keyword>
<keyword id="KW-1185">Reference proteome</keyword>
<organism>
    <name type="scientific">Caenorhabditis elegans</name>
    <dbReference type="NCBI Taxonomy" id="6239"/>
    <lineage>
        <taxon>Eukaryota</taxon>
        <taxon>Metazoa</taxon>
        <taxon>Ecdysozoa</taxon>
        <taxon>Nematoda</taxon>
        <taxon>Chromadorea</taxon>
        <taxon>Rhabditida</taxon>
        <taxon>Rhabditina</taxon>
        <taxon>Rhabditomorpha</taxon>
        <taxon>Rhabditoidea</taxon>
        <taxon>Rhabditidae</taxon>
        <taxon>Peloderinae</taxon>
        <taxon>Caenorhabditis</taxon>
    </lineage>
</organism>
<dbReference type="EMBL" id="FO080509">
    <property type="protein sequence ID" value="CCD64252.1"/>
    <property type="molecule type" value="Genomic_DNA"/>
</dbReference>
<dbReference type="PIR" id="T28786">
    <property type="entry name" value="T28786"/>
</dbReference>
<dbReference type="RefSeq" id="NP_491370.1">
    <property type="nucleotide sequence ID" value="NM_058969.5"/>
</dbReference>
<dbReference type="SMR" id="O01974"/>
<dbReference type="BioGRID" id="37513">
    <property type="interactions" value="18"/>
</dbReference>
<dbReference type="FunCoup" id="O01974">
    <property type="interactions" value="3023"/>
</dbReference>
<dbReference type="STRING" id="6239.C41D11.2.1"/>
<dbReference type="PaxDb" id="6239-C41D11.2"/>
<dbReference type="PeptideAtlas" id="O01974"/>
<dbReference type="EnsemblMetazoa" id="C41D11.2.1">
    <property type="protein sequence ID" value="C41D11.2.1"/>
    <property type="gene ID" value="WBGene00001231"/>
</dbReference>
<dbReference type="GeneID" id="172044"/>
<dbReference type="KEGG" id="cel:CELE_C41D11.2"/>
<dbReference type="UCSC" id="C41D11.2">
    <property type="organism name" value="c. elegans"/>
</dbReference>
<dbReference type="AGR" id="WB:WBGene00001231"/>
<dbReference type="CTD" id="172044"/>
<dbReference type="WormBase" id="C41D11.2">
    <property type="protein sequence ID" value="CE29220"/>
    <property type="gene ID" value="WBGene00001231"/>
    <property type="gene designation" value="eif-3.H"/>
</dbReference>
<dbReference type="eggNOG" id="KOG1560">
    <property type="taxonomic scope" value="Eukaryota"/>
</dbReference>
<dbReference type="GeneTree" id="ENSGT00730000111042"/>
<dbReference type="HOGENOM" id="CLU_044094_0_0_1"/>
<dbReference type="InParanoid" id="O01974"/>
<dbReference type="OMA" id="WYQSTYF"/>
<dbReference type="OrthoDB" id="10265695at2759"/>
<dbReference type="PhylomeDB" id="O01974"/>
<dbReference type="Reactome" id="R-CEL-156827">
    <property type="pathway name" value="L13a-mediated translational silencing of Ceruloplasmin expression"/>
</dbReference>
<dbReference type="Reactome" id="R-CEL-72649">
    <property type="pathway name" value="Translation initiation complex formation"/>
</dbReference>
<dbReference type="Reactome" id="R-CEL-72689">
    <property type="pathway name" value="Formation of a pool of free 40S subunits"/>
</dbReference>
<dbReference type="Reactome" id="R-CEL-72695">
    <property type="pathway name" value="Formation of the ternary complex, and subsequently, the 43S complex"/>
</dbReference>
<dbReference type="Reactome" id="R-CEL-72702">
    <property type="pathway name" value="Ribosomal scanning and start codon recognition"/>
</dbReference>
<dbReference type="PRO" id="PR:O01974"/>
<dbReference type="Proteomes" id="UP000001940">
    <property type="component" value="Chromosome I"/>
</dbReference>
<dbReference type="Bgee" id="WBGene00001231">
    <property type="expression patterns" value="Expressed in adult organism and 4 other cell types or tissues"/>
</dbReference>
<dbReference type="GO" id="GO:0016282">
    <property type="term" value="C:eukaryotic 43S preinitiation complex"/>
    <property type="evidence" value="ECO:0000318"/>
    <property type="project" value="GO_Central"/>
</dbReference>
<dbReference type="GO" id="GO:0033290">
    <property type="term" value="C:eukaryotic 48S preinitiation complex"/>
    <property type="evidence" value="ECO:0007669"/>
    <property type="project" value="UniProtKB-UniRule"/>
</dbReference>
<dbReference type="GO" id="GO:0005852">
    <property type="term" value="C:eukaryotic translation initiation factor 3 complex"/>
    <property type="evidence" value="ECO:0000318"/>
    <property type="project" value="GO_Central"/>
</dbReference>
<dbReference type="GO" id="GO:0008237">
    <property type="term" value="F:metallopeptidase activity"/>
    <property type="evidence" value="ECO:0000318"/>
    <property type="project" value="GO_Central"/>
</dbReference>
<dbReference type="GO" id="GO:0003743">
    <property type="term" value="F:translation initiation factor activity"/>
    <property type="evidence" value="ECO:0007669"/>
    <property type="project" value="UniProtKB-UniRule"/>
</dbReference>
<dbReference type="GO" id="GO:0001732">
    <property type="term" value="P:formation of cytoplasmic translation initiation complex"/>
    <property type="evidence" value="ECO:0007669"/>
    <property type="project" value="UniProtKB-UniRule"/>
</dbReference>
<dbReference type="GO" id="GO:0006413">
    <property type="term" value="P:translational initiation"/>
    <property type="evidence" value="ECO:0000318"/>
    <property type="project" value="GO_Central"/>
</dbReference>
<dbReference type="CDD" id="cd08065">
    <property type="entry name" value="MPN_eIF3h"/>
    <property type="match status" value="1"/>
</dbReference>
<dbReference type="FunFam" id="3.40.140.10:FF:000087">
    <property type="entry name" value="Eukaryotic translation initiation factor 3 subunit H"/>
    <property type="match status" value="1"/>
</dbReference>
<dbReference type="Gene3D" id="3.40.140.10">
    <property type="entry name" value="Cytidine Deaminase, domain 2"/>
    <property type="match status" value="1"/>
</dbReference>
<dbReference type="HAMAP" id="MF_03007">
    <property type="entry name" value="eIF3h"/>
    <property type="match status" value="1"/>
</dbReference>
<dbReference type="InterPro" id="IPR027524">
    <property type="entry name" value="eIF3h"/>
</dbReference>
<dbReference type="InterPro" id="IPR045810">
    <property type="entry name" value="eIF3h_C"/>
</dbReference>
<dbReference type="InterPro" id="IPR000555">
    <property type="entry name" value="JAMM/MPN+_dom"/>
</dbReference>
<dbReference type="InterPro" id="IPR050242">
    <property type="entry name" value="JAMM_MPN+_peptidase_M67A"/>
</dbReference>
<dbReference type="InterPro" id="IPR037518">
    <property type="entry name" value="MPN"/>
</dbReference>
<dbReference type="PANTHER" id="PTHR10410">
    <property type="entry name" value="EUKARYOTIC TRANSLATION INITIATION FACTOR 3 -RELATED"/>
    <property type="match status" value="1"/>
</dbReference>
<dbReference type="Pfam" id="PF19445">
    <property type="entry name" value="eIF3h_C"/>
    <property type="match status" value="1"/>
</dbReference>
<dbReference type="Pfam" id="PF01398">
    <property type="entry name" value="JAB"/>
    <property type="match status" value="1"/>
</dbReference>
<dbReference type="SMART" id="SM00232">
    <property type="entry name" value="JAB_MPN"/>
    <property type="match status" value="1"/>
</dbReference>
<dbReference type="PROSITE" id="PS50249">
    <property type="entry name" value="MPN"/>
    <property type="match status" value="1"/>
</dbReference>
<comment type="function">
    <text evidence="1">Component of the eukaryotic translation initiation factor 3 (eIF-3) complex, which is involved in protein synthesis of a specialized repertoire of mRNAs and, together with other initiation factors, stimulates binding of mRNA and methionyl-tRNAi to the 40S ribosome. The eIF-3 complex specifically targets and initiates translation of a subset of mRNAs involved in cell proliferation.</text>
</comment>
<comment type="subunit">
    <text evidence="1">Component of the eukaryotic translation initiation factor 3 (eIF-3) complex.</text>
</comment>
<comment type="subcellular location">
    <subcellularLocation>
        <location evidence="1">Cytoplasm</location>
    </subcellularLocation>
</comment>
<comment type="similarity">
    <text evidence="1">Belongs to the eIF-3 subunit H family.</text>
</comment>
<evidence type="ECO:0000255" key="1">
    <source>
        <dbReference type="HAMAP-Rule" id="MF_03007"/>
    </source>
</evidence>
<evidence type="ECO:0000255" key="2">
    <source>
        <dbReference type="PROSITE-ProRule" id="PRU01182"/>
    </source>
</evidence>
<sequence length="365" mass="40965">MSTAVTITAPSVKHILLDSLVVMKIVKHVDSELHAGISEVSGDACAGVLTGLVFLEDSRLEITNCFPTVRNEPVMDDDANAAQQYEEQKQHEMLDMLRKFRTMNIDYEIVGFYQSHQFGAGFSHDLVESMFDYQAMGPENVVLIYDPIKTRQGQLSLRAWRLSTAALDLASKNDWRPELVKAAGLTYQNMFEELPIIIKSSYLNNVLMSELSLAKSCSSDKYSTRHFDLGSKKSLEKSVRAMMANVDELNKSIQSLTKYTIDKQRHDNMVFSLTQKRQQENESRVARGDPTIPMDDIKRIKAPQLQTRNGLLDELLASFDTNALADFSKTVTSENITKMFIAEAVAEEKVAGTKDRTLSSVSSTR</sequence>
<feature type="chain" id="PRO_0000365198" description="Eukaryotic translation initiation factor 3 subunit H">
    <location>
        <begin position="1"/>
        <end position="365"/>
    </location>
</feature>
<feature type="domain" description="MPN" evidence="2">
    <location>
        <begin position="15"/>
        <end position="166"/>
    </location>
</feature>
<reference key="1">
    <citation type="journal article" date="1998" name="Science">
        <title>Genome sequence of the nematode C. elegans: a platform for investigating biology.</title>
        <authorList>
            <consortium name="The C. elegans sequencing consortium"/>
        </authorList>
    </citation>
    <scope>NUCLEOTIDE SEQUENCE [LARGE SCALE GENOMIC DNA]</scope>
    <source>
        <strain>Bristol N2</strain>
    </source>
</reference>
<accession>O01974</accession>
<gene>
    <name evidence="1" type="primary">eif-3.H</name>
    <name type="ORF">C41D11.2</name>
</gene>
<name>EIF3H_CAEEL</name>